<sequence>MSDAPKKVVLAYSGGLDTSIILKWLQTEYGCEVITFTADLGQGEELEPARQKAELLGIKPENIHIVDVREEFVRDFVFPMFRANAVYEGLYLLGTSIARPLISKHLVEIAHQHGADAVAHGATGKGNDQVRFELSAYALDPSIKVIAPWREWDLTSRTKLIEFAEQNQIPIAKDKRGEAPFSVDANLLHTSSEGKALENPADEAPDYVYQRTVSPEDAPDQPEYIEVSFERGDAVAINGEALSPATILTALNEYGRKHGIGRLDFVENRFVGMKSRGIYETPGGTILLEAHRGIEQITLDSGAGHLKDSIMPRYAELIYNGFWYSPEREMLQALIDKSQEHVTGTVRLKLYKGGVHTVGRWSEHSLYSEKHVTFEDDAGAYDQKDAAGFIRLNALRLKLVANRNARFK</sequence>
<proteinExistence type="inferred from homology"/>
<reference key="1">
    <citation type="submission" date="2006-12" db="EMBL/GenBank/DDBJ databases">
        <title>Complete sequence of chromosome 1 of Paracoccus denitrificans PD1222.</title>
        <authorList>
            <person name="Copeland A."/>
            <person name="Lucas S."/>
            <person name="Lapidus A."/>
            <person name="Barry K."/>
            <person name="Detter J.C."/>
            <person name="Glavina del Rio T."/>
            <person name="Hammon N."/>
            <person name="Israni S."/>
            <person name="Dalin E."/>
            <person name="Tice H."/>
            <person name="Pitluck S."/>
            <person name="Munk A.C."/>
            <person name="Brettin T."/>
            <person name="Bruce D."/>
            <person name="Han C."/>
            <person name="Tapia R."/>
            <person name="Gilna P."/>
            <person name="Schmutz J."/>
            <person name="Larimer F."/>
            <person name="Land M."/>
            <person name="Hauser L."/>
            <person name="Kyrpides N."/>
            <person name="Lykidis A."/>
            <person name="Spiro S."/>
            <person name="Richardson D.J."/>
            <person name="Moir J.W.B."/>
            <person name="Ferguson S.J."/>
            <person name="van Spanning R.J.M."/>
            <person name="Richardson P."/>
        </authorList>
    </citation>
    <scope>NUCLEOTIDE SEQUENCE [LARGE SCALE GENOMIC DNA]</scope>
    <source>
        <strain>Pd 1222</strain>
    </source>
</reference>
<name>ASSY_PARDP</name>
<protein>
    <recommendedName>
        <fullName evidence="1">Argininosuccinate synthase</fullName>
        <ecNumber evidence="1">6.3.4.5</ecNumber>
    </recommendedName>
    <alternativeName>
        <fullName evidence="1">Citrulline--aspartate ligase</fullName>
    </alternativeName>
</protein>
<organism>
    <name type="scientific">Paracoccus denitrificans (strain Pd 1222)</name>
    <dbReference type="NCBI Taxonomy" id="318586"/>
    <lineage>
        <taxon>Bacteria</taxon>
        <taxon>Pseudomonadati</taxon>
        <taxon>Pseudomonadota</taxon>
        <taxon>Alphaproteobacteria</taxon>
        <taxon>Rhodobacterales</taxon>
        <taxon>Paracoccaceae</taxon>
        <taxon>Paracoccus</taxon>
    </lineage>
</organism>
<keyword id="KW-0028">Amino-acid biosynthesis</keyword>
<keyword id="KW-0055">Arginine biosynthesis</keyword>
<keyword id="KW-0067">ATP-binding</keyword>
<keyword id="KW-0963">Cytoplasm</keyword>
<keyword id="KW-0436">Ligase</keyword>
<keyword id="KW-0547">Nucleotide-binding</keyword>
<keyword id="KW-1185">Reference proteome</keyword>
<comment type="catalytic activity">
    <reaction evidence="1">
        <text>L-citrulline + L-aspartate + ATP = 2-(N(omega)-L-arginino)succinate + AMP + diphosphate + H(+)</text>
        <dbReference type="Rhea" id="RHEA:10932"/>
        <dbReference type="ChEBI" id="CHEBI:15378"/>
        <dbReference type="ChEBI" id="CHEBI:29991"/>
        <dbReference type="ChEBI" id="CHEBI:30616"/>
        <dbReference type="ChEBI" id="CHEBI:33019"/>
        <dbReference type="ChEBI" id="CHEBI:57472"/>
        <dbReference type="ChEBI" id="CHEBI:57743"/>
        <dbReference type="ChEBI" id="CHEBI:456215"/>
        <dbReference type="EC" id="6.3.4.5"/>
    </reaction>
</comment>
<comment type="pathway">
    <text evidence="1">Amino-acid biosynthesis; L-arginine biosynthesis; L-arginine from L-ornithine and carbamoyl phosphate: step 2/3.</text>
</comment>
<comment type="subunit">
    <text evidence="1">Homotetramer.</text>
</comment>
<comment type="subcellular location">
    <subcellularLocation>
        <location evidence="1">Cytoplasm</location>
    </subcellularLocation>
</comment>
<comment type="similarity">
    <text evidence="1">Belongs to the argininosuccinate synthase family. Type 1 subfamily.</text>
</comment>
<dbReference type="EC" id="6.3.4.5" evidence="1"/>
<dbReference type="EMBL" id="CP000489">
    <property type="protein sequence ID" value="ABL68611.1"/>
    <property type="molecule type" value="Genomic_DNA"/>
</dbReference>
<dbReference type="RefSeq" id="WP_011746844.1">
    <property type="nucleotide sequence ID" value="NC_008686.1"/>
</dbReference>
<dbReference type="SMR" id="A1AZB7"/>
<dbReference type="STRING" id="318586.Pden_0499"/>
<dbReference type="EnsemblBacteria" id="ABL68611">
    <property type="protein sequence ID" value="ABL68611"/>
    <property type="gene ID" value="Pden_0499"/>
</dbReference>
<dbReference type="GeneID" id="93451723"/>
<dbReference type="KEGG" id="pde:Pden_0499"/>
<dbReference type="eggNOG" id="COG0137">
    <property type="taxonomic scope" value="Bacteria"/>
</dbReference>
<dbReference type="HOGENOM" id="CLU_032784_4_2_5"/>
<dbReference type="OrthoDB" id="9801641at2"/>
<dbReference type="UniPathway" id="UPA00068">
    <property type="reaction ID" value="UER00113"/>
</dbReference>
<dbReference type="Proteomes" id="UP000000361">
    <property type="component" value="Chromosome 1"/>
</dbReference>
<dbReference type="GO" id="GO:0005737">
    <property type="term" value="C:cytoplasm"/>
    <property type="evidence" value="ECO:0007669"/>
    <property type="project" value="UniProtKB-SubCell"/>
</dbReference>
<dbReference type="GO" id="GO:0004055">
    <property type="term" value="F:argininosuccinate synthase activity"/>
    <property type="evidence" value="ECO:0007669"/>
    <property type="project" value="UniProtKB-UniRule"/>
</dbReference>
<dbReference type="GO" id="GO:0005524">
    <property type="term" value="F:ATP binding"/>
    <property type="evidence" value="ECO:0007669"/>
    <property type="project" value="UniProtKB-UniRule"/>
</dbReference>
<dbReference type="GO" id="GO:0000053">
    <property type="term" value="P:argininosuccinate metabolic process"/>
    <property type="evidence" value="ECO:0007669"/>
    <property type="project" value="TreeGrafter"/>
</dbReference>
<dbReference type="GO" id="GO:0006526">
    <property type="term" value="P:L-arginine biosynthetic process"/>
    <property type="evidence" value="ECO:0007669"/>
    <property type="project" value="UniProtKB-UniRule"/>
</dbReference>
<dbReference type="GO" id="GO:0000050">
    <property type="term" value="P:urea cycle"/>
    <property type="evidence" value="ECO:0007669"/>
    <property type="project" value="TreeGrafter"/>
</dbReference>
<dbReference type="CDD" id="cd01999">
    <property type="entry name" value="ASS"/>
    <property type="match status" value="1"/>
</dbReference>
<dbReference type="FunFam" id="3.40.50.620:FF:000019">
    <property type="entry name" value="Argininosuccinate synthase"/>
    <property type="match status" value="1"/>
</dbReference>
<dbReference type="FunFam" id="3.90.1260.10:FF:000007">
    <property type="entry name" value="Argininosuccinate synthase"/>
    <property type="match status" value="1"/>
</dbReference>
<dbReference type="Gene3D" id="3.90.1260.10">
    <property type="entry name" value="Argininosuccinate synthetase, chain A, domain 2"/>
    <property type="match status" value="1"/>
</dbReference>
<dbReference type="Gene3D" id="3.40.50.620">
    <property type="entry name" value="HUPs"/>
    <property type="match status" value="1"/>
</dbReference>
<dbReference type="Gene3D" id="1.20.5.470">
    <property type="entry name" value="Single helix bin"/>
    <property type="match status" value="1"/>
</dbReference>
<dbReference type="HAMAP" id="MF_00005">
    <property type="entry name" value="Arg_succ_synth_type1"/>
    <property type="match status" value="1"/>
</dbReference>
<dbReference type="InterPro" id="IPR048268">
    <property type="entry name" value="Arginosuc_syn_C"/>
</dbReference>
<dbReference type="InterPro" id="IPR048267">
    <property type="entry name" value="Arginosuc_syn_N"/>
</dbReference>
<dbReference type="InterPro" id="IPR001518">
    <property type="entry name" value="Arginosuc_synth"/>
</dbReference>
<dbReference type="InterPro" id="IPR018223">
    <property type="entry name" value="Arginosuc_synth_CS"/>
</dbReference>
<dbReference type="InterPro" id="IPR023434">
    <property type="entry name" value="Arginosuc_synth_type_1_subfam"/>
</dbReference>
<dbReference type="InterPro" id="IPR024074">
    <property type="entry name" value="AS_cat/multimer_dom_body"/>
</dbReference>
<dbReference type="InterPro" id="IPR014729">
    <property type="entry name" value="Rossmann-like_a/b/a_fold"/>
</dbReference>
<dbReference type="NCBIfam" id="TIGR00032">
    <property type="entry name" value="argG"/>
    <property type="match status" value="1"/>
</dbReference>
<dbReference type="NCBIfam" id="NF001770">
    <property type="entry name" value="PRK00509.1"/>
    <property type="match status" value="1"/>
</dbReference>
<dbReference type="PANTHER" id="PTHR11587">
    <property type="entry name" value="ARGININOSUCCINATE SYNTHASE"/>
    <property type="match status" value="1"/>
</dbReference>
<dbReference type="PANTHER" id="PTHR11587:SF2">
    <property type="entry name" value="ARGININOSUCCINATE SYNTHASE"/>
    <property type="match status" value="1"/>
</dbReference>
<dbReference type="Pfam" id="PF20979">
    <property type="entry name" value="Arginosuc_syn_C"/>
    <property type="match status" value="1"/>
</dbReference>
<dbReference type="Pfam" id="PF00764">
    <property type="entry name" value="Arginosuc_synth"/>
    <property type="match status" value="1"/>
</dbReference>
<dbReference type="SUPFAM" id="SSF52402">
    <property type="entry name" value="Adenine nucleotide alpha hydrolases-like"/>
    <property type="match status" value="1"/>
</dbReference>
<dbReference type="SUPFAM" id="SSF69864">
    <property type="entry name" value="Argininosuccinate synthetase, C-terminal domain"/>
    <property type="match status" value="1"/>
</dbReference>
<dbReference type="PROSITE" id="PS00564">
    <property type="entry name" value="ARGININOSUCCIN_SYN_1"/>
    <property type="match status" value="1"/>
</dbReference>
<dbReference type="PROSITE" id="PS00565">
    <property type="entry name" value="ARGININOSUCCIN_SYN_2"/>
    <property type="match status" value="1"/>
</dbReference>
<feature type="chain" id="PRO_0000321315" description="Argininosuccinate synthase">
    <location>
        <begin position="1"/>
        <end position="408"/>
    </location>
</feature>
<feature type="binding site" evidence="1">
    <location>
        <begin position="11"/>
        <end position="19"/>
    </location>
    <ligand>
        <name>ATP</name>
        <dbReference type="ChEBI" id="CHEBI:30616"/>
    </ligand>
</feature>
<feature type="binding site" evidence="1">
    <location>
        <position position="38"/>
    </location>
    <ligand>
        <name>ATP</name>
        <dbReference type="ChEBI" id="CHEBI:30616"/>
    </ligand>
</feature>
<feature type="binding site" evidence="1">
    <location>
        <position position="91"/>
    </location>
    <ligand>
        <name>L-citrulline</name>
        <dbReference type="ChEBI" id="CHEBI:57743"/>
    </ligand>
</feature>
<feature type="binding site" evidence="1">
    <location>
        <position position="96"/>
    </location>
    <ligand>
        <name>L-citrulline</name>
        <dbReference type="ChEBI" id="CHEBI:57743"/>
    </ligand>
</feature>
<feature type="binding site" evidence="1">
    <location>
        <position position="121"/>
    </location>
    <ligand>
        <name>ATP</name>
        <dbReference type="ChEBI" id="CHEBI:30616"/>
    </ligand>
</feature>
<feature type="binding site" evidence="1">
    <location>
        <position position="123"/>
    </location>
    <ligand>
        <name>L-aspartate</name>
        <dbReference type="ChEBI" id="CHEBI:29991"/>
    </ligand>
</feature>
<feature type="binding site" evidence="1">
    <location>
        <position position="127"/>
    </location>
    <ligand>
        <name>L-aspartate</name>
        <dbReference type="ChEBI" id="CHEBI:29991"/>
    </ligand>
</feature>
<feature type="binding site" evidence="1">
    <location>
        <position position="127"/>
    </location>
    <ligand>
        <name>L-citrulline</name>
        <dbReference type="ChEBI" id="CHEBI:57743"/>
    </ligand>
</feature>
<feature type="binding site" evidence="1">
    <location>
        <position position="128"/>
    </location>
    <ligand>
        <name>L-aspartate</name>
        <dbReference type="ChEBI" id="CHEBI:29991"/>
    </ligand>
</feature>
<feature type="binding site" evidence="1">
    <location>
        <position position="131"/>
    </location>
    <ligand>
        <name>L-citrulline</name>
        <dbReference type="ChEBI" id="CHEBI:57743"/>
    </ligand>
</feature>
<feature type="binding site" evidence="1">
    <location>
        <position position="182"/>
    </location>
    <ligand>
        <name>L-citrulline</name>
        <dbReference type="ChEBI" id="CHEBI:57743"/>
    </ligand>
</feature>
<feature type="binding site" evidence="1">
    <location>
        <position position="191"/>
    </location>
    <ligand>
        <name>L-citrulline</name>
        <dbReference type="ChEBI" id="CHEBI:57743"/>
    </ligand>
</feature>
<feature type="binding site" evidence="1">
    <location>
        <position position="267"/>
    </location>
    <ligand>
        <name>L-citrulline</name>
        <dbReference type="ChEBI" id="CHEBI:57743"/>
    </ligand>
</feature>
<feature type="binding site" evidence="1">
    <location>
        <position position="279"/>
    </location>
    <ligand>
        <name>L-citrulline</name>
        <dbReference type="ChEBI" id="CHEBI:57743"/>
    </ligand>
</feature>
<accession>A1AZB7</accession>
<gene>
    <name evidence="1" type="primary">argG</name>
    <name type="ordered locus">Pden_0499</name>
</gene>
<evidence type="ECO:0000255" key="1">
    <source>
        <dbReference type="HAMAP-Rule" id="MF_00005"/>
    </source>
</evidence>